<name>DFA26_MOUSE</name>
<feature type="signal peptide" evidence="2">
    <location>
        <begin position="1"/>
        <end position="19"/>
    </location>
</feature>
<feature type="propeptide" id="PRO_0000300078" evidence="1">
    <location>
        <begin position="20"/>
        <end position="58"/>
    </location>
</feature>
<feature type="peptide" id="PRO_0000300079" description="Alpha-defensin 26">
    <location>
        <begin position="59"/>
        <end position="93"/>
    </location>
</feature>
<feature type="region of interest" description="Disordered" evidence="3">
    <location>
        <begin position="24"/>
        <end position="55"/>
    </location>
</feature>
<feature type="compositionally biased region" description="Acidic residues" evidence="3">
    <location>
        <begin position="25"/>
        <end position="40"/>
    </location>
</feature>
<feature type="disulfide bond" evidence="1">
    <location>
        <begin position="64"/>
        <end position="92"/>
    </location>
</feature>
<feature type="disulfide bond" evidence="1">
    <location>
        <begin position="66"/>
        <end position="81"/>
    </location>
</feature>
<feature type="disulfide bond" evidence="1">
    <location>
        <begin position="71"/>
        <end position="91"/>
    </location>
</feature>
<dbReference type="EMBL" id="AY766470">
    <property type="protein sequence ID" value="AAX10126.1"/>
    <property type="molecule type" value="mRNA"/>
</dbReference>
<dbReference type="CCDS" id="CCDS40278.1"/>
<dbReference type="RefSeq" id="NP_001073402.1">
    <property type="nucleotide sequence ID" value="NM_001079933.2"/>
</dbReference>
<dbReference type="SMR" id="Q3L180"/>
<dbReference type="BioGRID" id="552851">
    <property type="interactions" value="3"/>
</dbReference>
<dbReference type="FunCoup" id="Q3L180">
    <property type="interactions" value="44"/>
</dbReference>
<dbReference type="STRING" id="10090.ENSMUSP00000073950"/>
<dbReference type="PaxDb" id="10090-ENSMUSP00000073950"/>
<dbReference type="DNASU" id="626708"/>
<dbReference type="Ensembl" id="ENSMUST00000074343.6">
    <property type="protein sequence ID" value="ENSMUSP00000073950.6"/>
    <property type="gene ID" value="ENSMUSG00000060070.6"/>
</dbReference>
<dbReference type="GeneID" id="626708"/>
<dbReference type="KEGG" id="mmu:626708"/>
<dbReference type="UCSC" id="uc009lbs.2">
    <property type="organism name" value="mouse"/>
</dbReference>
<dbReference type="AGR" id="MGI:3630390"/>
<dbReference type="CTD" id="626708"/>
<dbReference type="MGI" id="MGI:3630390">
    <property type="gene designation" value="Defa26"/>
</dbReference>
<dbReference type="VEuPathDB" id="HostDB:ENSMUSG00000060070"/>
<dbReference type="eggNOG" id="ENOG502T2EX">
    <property type="taxonomic scope" value="Eukaryota"/>
</dbReference>
<dbReference type="GeneTree" id="ENSGT00940000153268"/>
<dbReference type="HOGENOM" id="CLU_160803_1_0_1"/>
<dbReference type="InParanoid" id="Q3L180"/>
<dbReference type="OrthoDB" id="83024at9989"/>
<dbReference type="PhylomeDB" id="Q3L180"/>
<dbReference type="TreeFam" id="TF338414"/>
<dbReference type="Reactome" id="R-MMU-1461973">
    <property type="pathway name" value="Defensins"/>
</dbReference>
<dbReference type="Reactome" id="R-MMU-1462054">
    <property type="pathway name" value="Alpha-defensins"/>
</dbReference>
<dbReference type="Reactome" id="R-MMU-6798695">
    <property type="pathway name" value="Neutrophil degranulation"/>
</dbReference>
<dbReference type="BioGRID-ORCS" id="626708">
    <property type="hits" value="7 hits in 42 CRISPR screens"/>
</dbReference>
<dbReference type="PRO" id="PR:Q3L180"/>
<dbReference type="Proteomes" id="UP000000589">
    <property type="component" value="Chromosome 8"/>
</dbReference>
<dbReference type="RNAct" id="Q3L180">
    <property type="molecule type" value="protein"/>
</dbReference>
<dbReference type="Bgee" id="ENSMUSG00000060070">
    <property type="expression patterns" value="Expressed in ileum and 7 other cell types or tissues"/>
</dbReference>
<dbReference type="GO" id="GO:0005615">
    <property type="term" value="C:extracellular space"/>
    <property type="evidence" value="ECO:0007669"/>
    <property type="project" value="InterPro"/>
</dbReference>
<dbReference type="GO" id="GO:0042742">
    <property type="term" value="P:defense response to bacterium"/>
    <property type="evidence" value="ECO:0007669"/>
    <property type="project" value="UniProtKB-KW"/>
</dbReference>
<dbReference type="InterPro" id="IPR016327">
    <property type="entry name" value="Alpha-defensin"/>
</dbReference>
<dbReference type="InterPro" id="IPR006081">
    <property type="entry name" value="Alpha-defensin_C"/>
</dbReference>
<dbReference type="InterPro" id="IPR002366">
    <property type="entry name" value="Alpha-defensin_N"/>
</dbReference>
<dbReference type="InterPro" id="IPR006080">
    <property type="entry name" value="Beta/alpha-defensin_C"/>
</dbReference>
<dbReference type="PANTHER" id="PTHR11876">
    <property type="entry name" value="ALPHA-DEFENSIN 1"/>
    <property type="match status" value="1"/>
</dbReference>
<dbReference type="PANTHER" id="PTHR11876:SF2">
    <property type="entry name" value="ALPHA-DEFENSIN 1-RELATED"/>
    <property type="match status" value="1"/>
</dbReference>
<dbReference type="Pfam" id="PF00323">
    <property type="entry name" value="Defensin_1"/>
    <property type="match status" value="1"/>
</dbReference>
<dbReference type="Pfam" id="PF00879">
    <property type="entry name" value="Defensin_propep"/>
    <property type="match status" value="1"/>
</dbReference>
<dbReference type="PIRSF" id="PIRSF001875">
    <property type="entry name" value="Alpha-defensin"/>
    <property type="match status" value="1"/>
</dbReference>
<dbReference type="SMART" id="SM01418">
    <property type="entry name" value="Defensin_propep"/>
    <property type="match status" value="1"/>
</dbReference>
<dbReference type="SMART" id="SM00048">
    <property type="entry name" value="DEFSN"/>
    <property type="match status" value="1"/>
</dbReference>
<dbReference type="SUPFAM" id="SSF57392">
    <property type="entry name" value="Defensin-like"/>
    <property type="match status" value="1"/>
</dbReference>
<dbReference type="PROSITE" id="PS00269">
    <property type="entry name" value="DEFENSIN"/>
    <property type="match status" value="1"/>
</dbReference>
<proteinExistence type="inferred from homology"/>
<evidence type="ECO:0000250" key="1"/>
<evidence type="ECO:0000255" key="2"/>
<evidence type="ECO:0000256" key="3">
    <source>
        <dbReference type="SAM" id="MobiDB-lite"/>
    </source>
</evidence>
<evidence type="ECO:0000305" key="4"/>
<accession>Q3L180</accession>
<sequence>MKTLVLLSALFLLAFQVQADPIQNTDEETNTEVQPQEEDQAVSVSFGNPEGSDLQEESLRDLGCYCRKRGCTRRERINGTCRKGHLMYTLCCL</sequence>
<gene>
    <name type="primary">Defa26</name>
    <name type="synonym">Defcr26</name>
</gene>
<reference key="1">
    <citation type="journal article" date="2004" name="Physiol. Genomics">
        <title>Rapid evolution and diversification of mammalian alpha-defensins as revealed by comparative analysis of rodent and primate genes.</title>
        <authorList>
            <person name="Patil A."/>
            <person name="Hughes A.L."/>
            <person name="Zhang G."/>
        </authorList>
    </citation>
    <scope>NUCLEOTIDE SEQUENCE [MRNA]</scope>
    <source>
        <strain>C57BL/6J</strain>
    </source>
</reference>
<comment type="function">
    <text evidence="1">May have microbicidal activities.</text>
</comment>
<comment type="subcellular location">
    <subcellularLocation>
        <location evidence="1">Secreted</location>
    </subcellularLocation>
</comment>
<comment type="similarity">
    <text evidence="4">Belongs to the alpha-defensin family.</text>
</comment>
<protein>
    <recommendedName>
        <fullName>Alpha-defensin 26</fullName>
    </recommendedName>
    <alternativeName>
        <fullName>Defensin-related cryptdin-26</fullName>
    </alternativeName>
</protein>
<organism>
    <name type="scientific">Mus musculus</name>
    <name type="common">Mouse</name>
    <dbReference type="NCBI Taxonomy" id="10090"/>
    <lineage>
        <taxon>Eukaryota</taxon>
        <taxon>Metazoa</taxon>
        <taxon>Chordata</taxon>
        <taxon>Craniata</taxon>
        <taxon>Vertebrata</taxon>
        <taxon>Euteleostomi</taxon>
        <taxon>Mammalia</taxon>
        <taxon>Eutheria</taxon>
        <taxon>Euarchontoglires</taxon>
        <taxon>Glires</taxon>
        <taxon>Rodentia</taxon>
        <taxon>Myomorpha</taxon>
        <taxon>Muroidea</taxon>
        <taxon>Muridae</taxon>
        <taxon>Murinae</taxon>
        <taxon>Mus</taxon>
        <taxon>Mus</taxon>
    </lineage>
</organism>
<keyword id="KW-0044">Antibiotic</keyword>
<keyword id="KW-0929">Antimicrobial</keyword>
<keyword id="KW-0211">Defensin</keyword>
<keyword id="KW-1015">Disulfide bond</keyword>
<keyword id="KW-1185">Reference proteome</keyword>
<keyword id="KW-0964">Secreted</keyword>
<keyword id="KW-0732">Signal</keyword>